<accession>P19458</accession>
<evidence type="ECO:0000250" key="1"/>
<evidence type="ECO:0000305" key="2"/>
<protein>
    <recommendedName>
        <fullName evidence="2">Small ribosomal subunit protein uS7c</fullName>
    </recommendedName>
    <alternativeName>
        <fullName>30S ribosomal protein S7, chloroplastic</fullName>
    </alternativeName>
</protein>
<proteinExistence type="inferred from homology"/>
<sequence>MSRRSTTKKKLALPDPIYNSRLVNMLTVRILKEGKKHLAQRIIYNAFDIIKQRTGEDAILVFESAIKKVTPLVEVKARRIGGSTYQVPMEVRAFRGTNLALRWITKYARERAGKSMSMKLANEIMDAANETGSSIRKREEIHRMAEANKAFAHYRF</sequence>
<name>RR7_GUITH</name>
<dbReference type="EMBL" id="AF041468">
    <property type="protein sequence ID" value="AAC35729.1"/>
    <property type="molecule type" value="Genomic_DNA"/>
</dbReference>
<dbReference type="RefSeq" id="NP_050795.1">
    <property type="nucleotide sequence ID" value="NC_000926.1"/>
</dbReference>
<dbReference type="SMR" id="P19458"/>
<dbReference type="GeneID" id="857103"/>
<dbReference type="HOGENOM" id="CLU_072226_1_1_1"/>
<dbReference type="OMA" id="DDTHRMA"/>
<dbReference type="GO" id="GO:0009507">
    <property type="term" value="C:chloroplast"/>
    <property type="evidence" value="ECO:0007669"/>
    <property type="project" value="UniProtKB-SubCell"/>
</dbReference>
<dbReference type="GO" id="GO:0015935">
    <property type="term" value="C:small ribosomal subunit"/>
    <property type="evidence" value="ECO:0007669"/>
    <property type="project" value="InterPro"/>
</dbReference>
<dbReference type="GO" id="GO:0019843">
    <property type="term" value="F:rRNA binding"/>
    <property type="evidence" value="ECO:0007669"/>
    <property type="project" value="UniProtKB-UniRule"/>
</dbReference>
<dbReference type="GO" id="GO:0003735">
    <property type="term" value="F:structural constituent of ribosome"/>
    <property type="evidence" value="ECO:0007669"/>
    <property type="project" value="InterPro"/>
</dbReference>
<dbReference type="GO" id="GO:0006412">
    <property type="term" value="P:translation"/>
    <property type="evidence" value="ECO:0007669"/>
    <property type="project" value="UniProtKB-UniRule"/>
</dbReference>
<dbReference type="CDD" id="cd14871">
    <property type="entry name" value="uS7_Chloroplast"/>
    <property type="match status" value="1"/>
</dbReference>
<dbReference type="FunFam" id="1.10.455.10:FF:000001">
    <property type="entry name" value="30S ribosomal protein S7"/>
    <property type="match status" value="1"/>
</dbReference>
<dbReference type="Gene3D" id="1.10.455.10">
    <property type="entry name" value="Ribosomal protein S7 domain"/>
    <property type="match status" value="1"/>
</dbReference>
<dbReference type="HAMAP" id="MF_00480_B">
    <property type="entry name" value="Ribosomal_uS7_B"/>
    <property type="match status" value="1"/>
</dbReference>
<dbReference type="InterPro" id="IPR000235">
    <property type="entry name" value="Ribosomal_uS7"/>
</dbReference>
<dbReference type="InterPro" id="IPR005717">
    <property type="entry name" value="Ribosomal_uS7_bac/org-type"/>
</dbReference>
<dbReference type="InterPro" id="IPR020606">
    <property type="entry name" value="Ribosomal_uS7_CS"/>
</dbReference>
<dbReference type="InterPro" id="IPR023798">
    <property type="entry name" value="Ribosomal_uS7_dom"/>
</dbReference>
<dbReference type="InterPro" id="IPR036823">
    <property type="entry name" value="Ribosomal_uS7_dom_sf"/>
</dbReference>
<dbReference type="NCBIfam" id="TIGR01029">
    <property type="entry name" value="rpsG_bact"/>
    <property type="match status" value="1"/>
</dbReference>
<dbReference type="PANTHER" id="PTHR11205">
    <property type="entry name" value="RIBOSOMAL PROTEIN S7"/>
    <property type="match status" value="1"/>
</dbReference>
<dbReference type="Pfam" id="PF00177">
    <property type="entry name" value="Ribosomal_S7"/>
    <property type="match status" value="1"/>
</dbReference>
<dbReference type="PIRSF" id="PIRSF002122">
    <property type="entry name" value="RPS7p_RPS7a_RPS5e_RPS7o"/>
    <property type="match status" value="1"/>
</dbReference>
<dbReference type="SUPFAM" id="SSF47973">
    <property type="entry name" value="Ribosomal protein S7"/>
    <property type="match status" value="1"/>
</dbReference>
<dbReference type="PROSITE" id="PS00052">
    <property type="entry name" value="RIBOSOMAL_S7"/>
    <property type="match status" value="1"/>
</dbReference>
<reference key="1">
    <citation type="journal article" date="1991" name="Curr. Genet.">
        <title>Unusual organization of a ribosomal protein operon in the plastid genome of Cryptomonas phi: evolutionary considerations.</title>
        <authorList>
            <person name="Douglas S.E."/>
        </authorList>
    </citation>
    <scope>NUCLEOTIDE SEQUENCE [GENOMIC DNA]</scope>
</reference>
<reference key="2">
    <citation type="journal article" date="1997" name="Biochem. Mol. Biol. Int.">
        <title>The large ribosomal protein gene cluster of a cryptomonad plastid: gene organization, sequence and evolutionary implications.</title>
        <authorList>
            <person name="Wang S.L."/>
            <person name="Liu X.-Q."/>
            <person name="Douglas S.E."/>
        </authorList>
    </citation>
    <scope>NUCLEOTIDE SEQUENCE [GENOMIC DNA]</scope>
</reference>
<comment type="function">
    <text evidence="1">One of the primary rRNA binding proteins, it binds directly to 16S rRNA where it nucleates assembly of the head domain of the 30S subunit.</text>
</comment>
<comment type="subunit">
    <text>Part of the 30S ribosomal subunit.</text>
</comment>
<comment type="subcellular location">
    <subcellularLocation>
        <location>Plastid</location>
        <location>Chloroplast</location>
    </subcellularLocation>
</comment>
<comment type="similarity">
    <text evidence="2">Belongs to the universal ribosomal protein uS7 family.</text>
</comment>
<feature type="chain" id="PRO_0000124458" description="Small ribosomal subunit protein uS7c">
    <location>
        <begin position="1"/>
        <end position="156"/>
    </location>
</feature>
<geneLocation type="chloroplast"/>
<organism>
    <name type="scientific">Guillardia theta</name>
    <name type="common">Cryptophyte</name>
    <name type="synonym">Cryptomonas phi</name>
    <dbReference type="NCBI Taxonomy" id="55529"/>
    <lineage>
        <taxon>Eukaryota</taxon>
        <taxon>Cryptophyceae</taxon>
        <taxon>Pyrenomonadales</taxon>
        <taxon>Geminigeraceae</taxon>
        <taxon>Guillardia</taxon>
    </lineage>
</organism>
<gene>
    <name type="primary">rps7</name>
</gene>
<keyword id="KW-0150">Chloroplast</keyword>
<keyword id="KW-0934">Plastid</keyword>
<keyword id="KW-0687">Ribonucleoprotein</keyword>
<keyword id="KW-0689">Ribosomal protein</keyword>
<keyword id="KW-0694">RNA-binding</keyword>
<keyword id="KW-0699">rRNA-binding</keyword>